<protein>
    <recommendedName>
        <fullName evidence="1">Regulatory protein RecX</fullName>
    </recommendedName>
</protein>
<accession>A5IL84</accession>
<organism>
    <name type="scientific">Thermotoga petrophila (strain ATCC BAA-488 / DSM 13995 / JCM 10881 / RKU-1)</name>
    <dbReference type="NCBI Taxonomy" id="390874"/>
    <lineage>
        <taxon>Bacteria</taxon>
        <taxon>Thermotogati</taxon>
        <taxon>Thermotogota</taxon>
        <taxon>Thermotogae</taxon>
        <taxon>Thermotogales</taxon>
        <taxon>Thermotogaceae</taxon>
        <taxon>Thermotoga</taxon>
    </lineage>
</organism>
<dbReference type="EMBL" id="CP000702">
    <property type="protein sequence ID" value="ABQ46957.1"/>
    <property type="molecule type" value="Genomic_DNA"/>
</dbReference>
<dbReference type="RefSeq" id="WP_011943500.1">
    <property type="nucleotide sequence ID" value="NC_009486.1"/>
</dbReference>
<dbReference type="SMR" id="A5IL84"/>
<dbReference type="STRING" id="390874.Tpet_0939"/>
<dbReference type="KEGG" id="tpt:Tpet_0939"/>
<dbReference type="eggNOG" id="COG2137">
    <property type="taxonomic scope" value="Bacteria"/>
</dbReference>
<dbReference type="HOGENOM" id="CLU_066607_5_1_0"/>
<dbReference type="Proteomes" id="UP000006558">
    <property type="component" value="Chromosome"/>
</dbReference>
<dbReference type="GO" id="GO:0005737">
    <property type="term" value="C:cytoplasm"/>
    <property type="evidence" value="ECO:0007669"/>
    <property type="project" value="UniProtKB-SubCell"/>
</dbReference>
<dbReference type="GO" id="GO:0006282">
    <property type="term" value="P:regulation of DNA repair"/>
    <property type="evidence" value="ECO:0007669"/>
    <property type="project" value="UniProtKB-UniRule"/>
</dbReference>
<dbReference type="Gene3D" id="1.10.10.10">
    <property type="entry name" value="Winged helix-like DNA-binding domain superfamily/Winged helix DNA-binding domain"/>
    <property type="match status" value="2"/>
</dbReference>
<dbReference type="HAMAP" id="MF_01114">
    <property type="entry name" value="RecX"/>
    <property type="match status" value="1"/>
</dbReference>
<dbReference type="InterPro" id="IPR053926">
    <property type="entry name" value="RecX_HTH_1st"/>
</dbReference>
<dbReference type="InterPro" id="IPR053924">
    <property type="entry name" value="RecX_HTH_2nd"/>
</dbReference>
<dbReference type="InterPro" id="IPR003783">
    <property type="entry name" value="Regulatory_RecX"/>
</dbReference>
<dbReference type="InterPro" id="IPR036388">
    <property type="entry name" value="WH-like_DNA-bd_sf"/>
</dbReference>
<dbReference type="PANTHER" id="PTHR33602">
    <property type="entry name" value="REGULATORY PROTEIN RECX FAMILY PROTEIN"/>
    <property type="match status" value="1"/>
</dbReference>
<dbReference type="PANTHER" id="PTHR33602:SF1">
    <property type="entry name" value="REGULATORY PROTEIN RECX FAMILY PROTEIN"/>
    <property type="match status" value="1"/>
</dbReference>
<dbReference type="Pfam" id="PF21982">
    <property type="entry name" value="RecX_HTH1"/>
    <property type="match status" value="1"/>
</dbReference>
<dbReference type="Pfam" id="PF02631">
    <property type="entry name" value="RecX_HTH2"/>
    <property type="match status" value="1"/>
</dbReference>
<keyword id="KW-0963">Cytoplasm</keyword>
<feature type="chain" id="PRO_1000065227" description="Regulatory protein RecX">
    <location>
        <begin position="1"/>
        <end position="161"/>
    </location>
</feature>
<name>RECX_THEP1</name>
<gene>
    <name evidence="1" type="primary">recX</name>
    <name type="ordered locus">Tpet_0939</name>
</gene>
<sequence length="161" mass="19664">MDYYQWRKKNRRRKRNLQTKKPLNYALKLLKYRVRFEDELRERLKKQGFADEEVESTINTLKKQGYLDDEKAAYLFALDEMRLKLFGPRVVRMKLKSLGVDEEIIERAIEKALEEIDFHEELKRLKGRFKDRWELRDYLYRRGFDPSLIEEILNKIDGGEE</sequence>
<comment type="function">
    <text evidence="1">Modulates RecA activity.</text>
</comment>
<comment type="subcellular location">
    <subcellularLocation>
        <location evidence="1">Cytoplasm</location>
    </subcellularLocation>
</comment>
<comment type="similarity">
    <text evidence="1">Belongs to the RecX family.</text>
</comment>
<reference key="1">
    <citation type="submission" date="2007-05" db="EMBL/GenBank/DDBJ databases">
        <title>Complete sequence of Thermotoga petrophila RKU-1.</title>
        <authorList>
            <consortium name="US DOE Joint Genome Institute"/>
            <person name="Copeland A."/>
            <person name="Lucas S."/>
            <person name="Lapidus A."/>
            <person name="Barry K."/>
            <person name="Glavina del Rio T."/>
            <person name="Dalin E."/>
            <person name="Tice H."/>
            <person name="Pitluck S."/>
            <person name="Sims D."/>
            <person name="Brettin T."/>
            <person name="Bruce D."/>
            <person name="Detter J.C."/>
            <person name="Han C."/>
            <person name="Tapia R."/>
            <person name="Schmutz J."/>
            <person name="Larimer F."/>
            <person name="Land M."/>
            <person name="Hauser L."/>
            <person name="Kyrpides N."/>
            <person name="Mikhailova N."/>
            <person name="Nelson K."/>
            <person name="Gogarten J.P."/>
            <person name="Noll K."/>
            <person name="Richardson P."/>
        </authorList>
    </citation>
    <scope>NUCLEOTIDE SEQUENCE [LARGE SCALE GENOMIC DNA]</scope>
    <source>
        <strain>ATCC BAA-488 / DSM 13995 / JCM 10881 / RKU-1</strain>
    </source>
</reference>
<proteinExistence type="inferred from homology"/>
<evidence type="ECO:0000255" key="1">
    <source>
        <dbReference type="HAMAP-Rule" id="MF_01114"/>
    </source>
</evidence>